<keyword id="KW-1185">Reference proteome</keyword>
<protein>
    <recommendedName>
        <fullName>Uncharacterized protein ORF49</fullName>
    </recommendedName>
</protein>
<proteinExistence type="predicted"/>
<feature type="chain" id="PRO_0000385077" description="Uncharacterized protein ORF49">
    <location>
        <begin position="1"/>
        <end position="1138"/>
    </location>
</feature>
<feature type="region of interest" description="Disordered" evidence="1">
    <location>
        <begin position="985"/>
        <end position="1015"/>
    </location>
</feature>
<feature type="region of interest" description="Disordered" evidence="1">
    <location>
        <begin position="1094"/>
        <end position="1138"/>
    </location>
</feature>
<feature type="compositionally biased region" description="Acidic residues" evidence="1">
    <location>
        <begin position="1110"/>
        <end position="1138"/>
    </location>
</feature>
<sequence>MDNLQWKYDMAGIKSAREQGYRRKIVARDISVSTGAKQYAYLLPPMYNLFLKQVHEKRDKNLYEVIDEKSPVRLYFDCDSFDRDEGGYGLDLDCKTSLKLFHDLLKNFILFLNPNSTANMKAHITRCIRQDKPNKHSFHAIYPGIVFKNINELKMFVLSFAYHLFEDKNDMRLAFKKQGKNKTLGRAFFDLAVYTKDRCFRLPFQSKKGDSAKLIPLREITLEEIENNICQPEDFVRKPDNVDTSIGDLLSAAVMEKYTGVKLSTYVRAYQEGVIKEKIKTKCIEKRNGSKKIKITTPRLEIEWDQMKIPGVETVEIREDKDFLQYFDPVELRGGFYSLYIHLLKDICYFLPDEVLKQWMGHTNDKKANYLIKSNRKKGAEYAMTGGYALELLAKIYGRCNVRDLRDPIPKPTNSFRNTTRINVTPDRWRPIEVSDMKKFFIDSQVRDLKTNTYNDCGMITAMADVDYGEKIALSKKLKMDTKKKCQFITGQMGASKSTGVMDYMVFSMISSIIANAMVIVPRCSLAGQTVKKIYNTYKEMISDKDRMKKIKNKRKIVINPYFSQAFTIGGLQEIYDELTSEITTTDTCGTICVCVLNSISKVRSHVFDTIIMDEPVTCVDNFYIDSEKKQKIPVKNILEKKGNTIAVTDLMIDMLMKITRNANQLIFIDAAFTEDVIRLCETLYWGAYTMQGTVDDWRKVLENEGVDQSNIRHKIKRIKDENILIRKWIQNKKEWNYDKKTDTRTIISTTEIDHFRLFRPIEYICVYDKKITRPIYTHIIKYDCKQTMMNKLLDDVREGKKLVVYCSVGKETASIINTINSMTSRECIVLPKVGGVTAKSLKGKENQLDEYMRSMEVVVVSSVLGTGTSYPEEGLFDAAYMFCKVTYGTPQISDMIQLSARVRATTTRTLHYHITTSTSGHKPNGDALKNSDYHGISFKDHLDKTYTSRDHLHRVHMSRPSLASEFMRNELQQSFGHVIDETLEKKLPTHETNSEIEKEKHSDGKRKESKMAQEIDKHHPDVYTDVMATSNRNMTDEDGTKYQTIVRHCVVRTNNTTEPDRTMDVDWDSSQGTSGEIFHRPVTVDRSRITEQLVATPGPSTSRKRKLSDDDEYEKYDSGIEDIETDVDEEEEVQNKL</sequence>
<evidence type="ECO:0000256" key="1">
    <source>
        <dbReference type="SAM" id="MobiDB-lite"/>
    </source>
</evidence>
<name>Y049_OSHVF</name>
<gene>
    <name type="ORF">ORF49</name>
</gene>
<reference key="1">
    <citation type="journal article" date="2005" name="J. Gen. Virol.">
        <title>A novel class of herpesvirus with bivalve hosts.</title>
        <authorList>
            <person name="Davison A.J."/>
            <person name="Trus B.L."/>
            <person name="Cheng N."/>
            <person name="Steven A.C."/>
            <person name="Watson M.S."/>
            <person name="Cunningham C."/>
            <person name="Le Deuff R.M."/>
            <person name="Renault T."/>
        </authorList>
    </citation>
    <scope>NUCLEOTIDE SEQUENCE [LARGE SCALE GENOMIC DNA]</scope>
</reference>
<dbReference type="EMBL" id="AY509253">
    <property type="protein sequence ID" value="AAS00940.1"/>
    <property type="molecule type" value="Genomic_DNA"/>
</dbReference>
<dbReference type="RefSeq" id="YP_024593.1">
    <property type="nucleotide sequence ID" value="NC_005881.2"/>
</dbReference>
<dbReference type="KEGG" id="vg:2948193"/>
<dbReference type="Proteomes" id="UP000007021">
    <property type="component" value="Segment"/>
</dbReference>
<dbReference type="GO" id="GO:0003682">
    <property type="term" value="F:chromatin binding"/>
    <property type="evidence" value="ECO:0007669"/>
    <property type="project" value="TreeGrafter"/>
</dbReference>
<dbReference type="GO" id="GO:0003887">
    <property type="term" value="F:DNA-directed DNA polymerase activity"/>
    <property type="evidence" value="ECO:0007669"/>
    <property type="project" value="InterPro"/>
</dbReference>
<dbReference type="GO" id="GO:0042276">
    <property type="term" value="P:error-prone translesion synthesis"/>
    <property type="evidence" value="ECO:0007669"/>
    <property type="project" value="InterPro"/>
</dbReference>
<dbReference type="GO" id="GO:0031297">
    <property type="term" value="P:replication fork processing"/>
    <property type="evidence" value="ECO:0007669"/>
    <property type="project" value="TreeGrafter"/>
</dbReference>
<dbReference type="GO" id="GO:0009411">
    <property type="term" value="P:response to UV"/>
    <property type="evidence" value="ECO:0007669"/>
    <property type="project" value="TreeGrafter"/>
</dbReference>
<dbReference type="InterPro" id="IPR044917">
    <property type="entry name" value="PRIMPOL"/>
</dbReference>
<dbReference type="PANTHER" id="PTHR31399">
    <property type="entry name" value="DNA-DIRECTED PRIMASE / POLYMERASE PROTEIN"/>
    <property type="match status" value="1"/>
</dbReference>
<dbReference type="PANTHER" id="PTHR31399:SF0">
    <property type="entry name" value="DNA-DIRECTED PRIMASE_POLYMERASE PROTEIN"/>
    <property type="match status" value="1"/>
</dbReference>
<accession>Q6R7H5</accession>
<organism>
    <name type="scientific">Ostreid herpesvirus 1 (isolate France)</name>
    <name type="common">OsHV-1</name>
    <name type="synonym">Pacific oyster herpesvirus</name>
    <dbReference type="NCBI Taxonomy" id="654903"/>
    <lineage>
        <taxon>Viruses</taxon>
        <taxon>Duplodnaviria</taxon>
        <taxon>Heunggongvirae</taxon>
        <taxon>Peploviricota</taxon>
        <taxon>Herviviricetes</taxon>
        <taxon>Herpesvirales</taxon>
        <taxon>Malacoherpesviridae</taxon>
        <taxon>Ostreavirus</taxon>
        <taxon>Ostreavirus ostreidmalaco1</taxon>
        <taxon>Ostreid herpesvirus 1</taxon>
    </lineage>
</organism>
<organismHost>
    <name type="scientific">Magallana gigas</name>
    <name type="common">Pacific oyster</name>
    <name type="synonym">Crassostrea gigas</name>
    <dbReference type="NCBI Taxonomy" id="29159"/>
</organismHost>
<organismHost>
    <name type="scientific">Pecten maximus</name>
    <name type="common">King scallop</name>
    <name type="synonym">Pilgrim's clam</name>
    <dbReference type="NCBI Taxonomy" id="6579"/>
</organismHost>